<dbReference type="EMBL" id="AE014075">
    <property type="protein sequence ID" value="AAN78972.1"/>
    <property type="status" value="ALT_INIT"/>
    <property type="molecule type" value="Genomic_DNA"/>
</dbReference>
<dbReference type="RefSeq" id="WP_000158159.1">
    <property type="nucleotide sequence ID" value="NZ_CP051263.1"/>
</dbReference>
<dbReference type="STRING" id="199310.c0494"/>
<dbReference type="KEGG" id="ecc:c0494"/>
<dbReference type="eggNOG" id="COG1671">
    <property type="taxonomic scope" value="Bacteria"/>
</dbReference>
<dbReference type="HOGENOM" id="CLU_106619_1_0_6"/>
<dbReference type="Proteomes" id="UP000001410">
    <property type="component" value="Chromosome"/>
</dbReference>
<dbReference type="CDD" id="cd18720">
    <property type="entry name" value="PIN_YqxD-like"/>
    <property type="match status" value="1"/>
</dbReference>
<dbReference type="HAMAP" id="MF_00489">
    <property type="entry name" value="UPF0178"/>
    <property type="match status" value="1"/>
</dbReference>
<dbReference type="InterPro" id="IPR003791">
    <property type="entry name" value="UPF0178"/>
</dbReference>
<dbReference type="NCBIfam" id="NF001095">
    <property type="entry name" value="PRK00124.1"/>
    <property type="match status" value="1"/>
</dbReference>
<dbReference type="PANTHER" id="PTHR35146">
    <property type="entry name" value="UPF0178 PROTEIN YAII"/>
    <property type="match status" value="1"/>
</dbReference>
<dbReference type="PANTHER" id="PTHR35146:SF1">
    <property type="entry name" value="UPF0178 PROTEIN YAII"/>
    <property type="match status" value="1"/>
</dbReference>
<dbReference type="Pfam" id="PF02639">
    <property type="entry name" value="DUF188"/>
    <property type="match status" value="1"/>
</dbReference>
<sequence>MTIWVDADACPNVIKEILYRAAERMQMPLVLVANQSLRVPPSRFIRTLRVAAGFDVADNEIVRQCEAGDLVITADIPLAAEAIEKGAAALNPRGERYTPATIRERLTMRDFMDTLRASGIQTGGPDSLSQRDRQAFAAELEKWWLEVQRSRG</sequence>
<organism>
    <name type="scientific">Escherichia coli O6:H1 (strain CFT073 / ATCC 700928 / UPEC)</name>
    <dbReference type="NCBI Taxonomy" id="199310"/>
    <lineage>
        <taxon>Bacteria</taxon>
        <taxon>Pseudomonadati</taxon>
        <taxon>Pseudomonadota</taxon>
        <taxon>Gammaproteobacteria</taxon>
        <taxon>Enterobacterales</taxon>
        <taxon>Enterobacteriaceae</taxon>
        <taxon>Escherichia</taxon>
    </lineage>
</organism>
<gene>
    <name type="primary">yaiI</name>
    <name type="ordered locus">c0494</name>
</gene>
<evidence type="ECO:0000305" key="1"/>
<reference key="1">
    <citation type="journal article" date="2002" name="Proc. Natl. Acad. Sci. U.S.A.">
        <title>Extensive mosaic structure revealed by the complete genome sequence of uropathogenic Escherichia coli.</title>
        <authorList>
            <person name="Welch R.A."/>
            <person name="Burland V."/>
            <person name="Plunkett G. III"/>
            <person name="Redford P."/>
            <person name="Roesch P."/>
            <person name="Rasko D."/>
            <person name="Buckles E.L."/>
            <person name="Liou S.-R."/>
            <person name="Boutin A."/>
            <person name="Hackett J."/>
            <person name="Stroud D."/>
            <person name="Mayhew G.F."/>
            <person name="Rose D.J."/>
            <person name="Zhou S."/>
            <person name="Schwartz D.C."/>
            <person name="Perna N.T."/>
            <person name="Mobley H.L.T."/>
            <person name="Donnenberg M.S."/>
            <person name="Blattner F.R."/>
        </authorList>
    </citation>
    <scope>NUCLEOTIDE SEQUENCE [LARGE SCALE GENOMIC DNA]</scope>
    <source>
        <strain>CFT073 / ATCC 700928 / UPEC</strain>
    </source>
</reference>
<feature type="chain" id="PRO_0000175981" description="UPF0178 protein YaiI">
    <location>
        <begin position="1"/>
        <end position="152"/>
    </location>
</feature>
<accession>P0A8D4</accession>
<accession>P52088</accession>
<accession>P75703</accession>
<accession>Q8XEB0</accession>
<name>YAII_ECOL6</name>
<comment type="similarity">
    <text evidence="1">Belongs to the UPF0178 family.</text>
</comment>
<comment type="sequence caution" evidence="1">
    <conflict type="erroneous initiation">
        <sequence resource="EMBL-CDS" id="AAN78972"/>
    </conflict>
</comment>
<protein>
    <recommendedName>
        <fullName>UPF0178 protein YaiI</fullName>
    </recommendedName>
</protein>
<keyword id="KW-1185">Reference proteome</keyword>
<proteinExistence type="inferred from homology"/>